<accession>P0CD83</accession>
<accession>O84526</accession>
<accession>P28535</accession>
<name>RL16_CHLTR</name>
<sequence length="138" mass="15803">MLMPKRTKFRKQQKGQFAGLSKGATFVDFGEFGMQTLERGWITSRQIEACRVAINRYLKRKGKVWIRVFPDKSVTKKPAETRMGKGKGAPDHWVVVVRPGRILFEVANVSKEDAQDALRRAAAKLGIRTRFVKRVERV</sequence>
<dbReference type="EMBL" id="AE001273">
    <property type="protein sequence ID" value="AAC68122.1"/>
    <property type="molecule type" value="Genomic_DNA"/>
</dbReference>
<dbReference type="PIR" id="G71506">
    <property type="entry name" value="G71506"/>
</dbReference>
<dbReference type="RefSeq" id="NP_220036.1">
    <property type="nucleotide sequence ID" value="NC_000117.1"/>
</dbReference>
<dbReference type="RefSeq" id="WP_009871885.1">
    <property type="nucleotide sequence ID" value="NC_000117.1"/>
</dbReference>
<dbReference type="SMR" id="P0CD83"/>
<dbReference type="FunCoup" id="P0CD83">
    <property type="interactions" value="252"/>
</dbReference>
<dbReference type="STRING" id="272561.CT_521"/>
<dbReference type="EnsemblBacteria" id="AAC68122">
    <property type="protein sequence ID" value="AAC68122"/>
    <property type="gene ID" value="CT_521"/>
</dbReference>
<dbReference type="GeneID" id="884298"/>
<dbReference type="KEGG" id="ctr:CT_521"/>
<dbReference type="PATRIC" id="fig|272561.5.peg.565"/>
<dbReference type="HOGENOM" id="CLU_078858_2_1_0"/>
<dbReference type="InParanoid" id="P0CD83"/>
<dbReference type="OrthoDB" id="9802589at2"/>
<dbReference type="Proteomes" id="UP000000431">
    <property type="component" value="Chromosome"/>
</dbReference>
<dbReference type="GO" id="GO:0022625">
    <property type="term" value="C:cytosolic large ribosomal subunit"/>
    <property type="evidence" value="ECO:0000318"/>
    <property type="project" value="GO_Central"/>
</dbReference>
<dbReference type="GO" id="GO:0019843">
    <property type="term" value="F:rRNA binding"/>
    <property type="evidence" value="ECO:0000318"/>
    <property type="project" value="GO_Central"/>
</dbReference>
<dbReference type="GO" id="GO:0003735">
    <property type="term" value="F:structural constituent of ribosome"/>
    <property type="evidence" value="ECO:0000318"/>
    <property type="project" value="GO_Central"/>
</dbReference>
<dbReference type="GO" id="GO:0000049">
    <property type="term" value="F:tRNA binding"/>
    <property type="evidence" value="ECO:0007669"/>
    <property type="project" value="UniProtKB-KW"/>
</dbReference>
<dbReference type="GO" id="GO:0006412">
    <property type="term" value="P:translation"/>
    <property type="evidence" value="ECO:0007669"/>
    <property type="project" value="UniProtKB-UniRule"/>
</dbReference>
<dbReference type="CDD" id="cd01433">
    <property type="entry name" value="Ribosomal_L16_L10e"/>
    <property type="match status" value="1"/>
</dbReference>
<dbReference type="FunFam" id="3.90.1170.10:FF:000001">
    <property type="entry name" value="50S ribosomal protein L16"/>
    <property type="match status" value="1"/>
</dbReference>
<dbReference type="Gene3D" id="3.90.1170.10">
    <property type="entry name" value="Ribosomal protein L10e/L16"/>
    <property type="match status" value="1"/>
</dbReference>
<dbReference type="HAMAP" id="MF_01342">
    <property type="entry name" value="Ribosomal_uL16"/>
    <property type="match status" value="1"/>
</dbReference>
<dbReference type="InterPro" id="IPR047873">
    <property type="entry name" value="Ribosomal_uL16"/>
</dbReference>
<dbReference type="InterPro" id="IPR000114">
    <property type="entry name" value="Ribosomal_uL16_bact-type"/>
</dbReference>
<dbReference type="InterPro" id="IPR020798">
    <property type="entry name" value="Ribosomal_uL16_CS"/>
</dbReference>
<dbReference type="InterPro" id="IPR016180">
    <property type="entry name" value="Ribosomal_uL16_dom"/>
</dbReference>
<dbReference type="InterPro" id="IPR036920">
    <property type="entry name" value="Ribosomal_uL16_sf"/>
</dbReference>
<dbReference type="NCBIfam" id="TIGR01164">
    <property type="entry name" value="rplP_bact"/>
    <property type="match status" value="1"/>
</dbReference>
<dbReference type="PANTHER" id="PTHR12220">
    <property type="entry name" value="50S/60S RIBOSOMAL PROTEIN L16"/>
    <property type="match status" value="1"/>
</dbReference>
<dbReference type="PANTHER" id="PTHR12220:SF13">
    <property type="entry name" value="LARGE RIBOSOMAL SUBUNIT PROTEIN UL16M"/>
    <property type="match status" value="1"/>
</dbReference>
<dbReference type="Pfam" id="PF00252">
    <property type="entry name" value="Ribosomal_L16"/>
    <property type="match status" value="1"/>
</dbReference>
<dbReference type="PRINTS" id="PR00060">
    <property type="entry name" value="RIBOSOMALL16"/>
</dbReference>
<dbReference type="SUPFAM" id="SSF54686">
    <property type="entry name" value="Ribosomal protein L16p/L10e"/>
    <property type="match status" value="1"/>
</dbReference>
<dbReference type="PROSITE" id="PS00586">
    <property type="entry name" value="RIBOSOMAL_L16_1"/>
    <property type="match status" value="1"/>
</dbReference>
<dbReference type="PROSITE" id="PS00701">
    <property type="entry name" value="RIBOSOMAL_L16_2"/>
    <property type="match status" value="1"/>
</dbReference>
<gene>
    <name evidence="1" type="primary">rplP</name>
    <name type="synonym">rl16</name>
    <name type="ordered locus">CT_521</name>
</gene>
<reference key="1">
    <citation type="journal article" date="1998" name="Science">
        <title>Genome sequence of an obligate intracellular pathogen of humans: Chlamydia trachomatis.</title>
        <authorList>
            <person name="Stephens R.S."/>
            <person name="Kalman S."/>
            <person name="Lammel C.J."/>
            <person name="Fan J."/>
            <person name="Marathe R."/>
            <person name="Aravind L."/>
            <person name="Mitchell W.P."/>
            <person name="Olinger L."/>
            <person name="Tatusov R.L."/>
            <person name="Zhao Q."/>
            <person name="Koonin E.V."/>
            <person name="Davis R.W."/>
        </authorList>
    </citation>
    <scope>NUCLEOTIDE SEQUENCE [LARGE SCALE GENOMIC DNA]</scope>
    <source>
        <strain>ATCC VR-885 / DSM 19411 / UW-3/Cx</strain>
    </source>
</reference>
<organism>
    <name type="scientific">Chlamydia trachomatis serovar D (strain ATCC VR-885 / DSM 19411 / UW-3/Cx)</name>
    <dbReference type="NCBI Taxonomy" id="272561"/>
    <lineage>
        <taxon>Bacteria</taxon>
        <taxon>Pseudomonadati</taxon>
        <taxon>Chlamydiota</taxon>
        <taxon>Chlamydiia</taxon>
        <taxon>Chlamydiales</taxon>
        <taxon>Chlamydiaceae</taxon>
        <taxon>Chlamydia/Chlamydophila group</taxon>
        <taxon>Chlamydia</taxon>
    </lineage>
</organism>
<evidence type="ECO:0000255" key="1">
    <source>
        <dbReference type="HAMAP-Rule" id="MF_01342"/>
    </source>
</evidence>
<evidence type="ECO:0000305" key="2"/>
<keyword id="KW-1185">Reference proteome</keyword>
<keyword id="KW-0687">Ribonucleoprotein</keyword>
<keyword id="KW-0689">Ribosomal protein</keyword>
<keyword id="KW-0694">RNA-binding</keyword>
<keyword id="KW-0699">rRNA-binding</keyword>
<keyword id="KW-0820">tRNA-binding</keyword>
<feature type="chain" id="PRO_0000062076" description="Large ribosomal subunit protein uL16">
    <location>
        <begin position="1"/>
        <end position="138"/>
    </location>
</feature>
<protein>
    <recommendedName>
        <fullName evidence="1">Large ribosomal subunit protein uL16</fullName>
    </recommendedName>
    <alternativeName>
        <fullName evidence="2">50S ribosomal protein L16</fullName>
    </alternativeName>
</protein>
<proteinExistence type="inferred from homology"/>
<comment type="function">
    <text evidence="1">Binds 23S rRNA and is also seen to make contacts with the A and possibly P site tRNAs.</text>
</comment>
<comment type="subunit">
    <text evidence="1">Part of the 50S ribosomal subunit.</text>
</comment>
<comment type="similarity">
    <text evidence="1">Belongs to the universal ribosomal protein uL16 family.</text>
</comment>